<reference key="1">
    <citation type="journal article" date="2002" name="Proc. Natl. Acad. Sci. U.S.A.">
        <title>The genome sequence of Bifidobacterium longum reflects its adaptation to the human gastrointestinal tract.</title>
        <authorList>
            <person name="Schell M.A."/>
            <person name="Karmirantzou M."/>
            <person name="Snel B."/>
            <person name="Vilanova D."/>
            <person name="Berger B."/>
            <person name="Pessi G."/>
            <person name="Zwahlen M.-C."/>
            <person name="Desiere F."/>
            <person name="Bork P."/>
            <person name="Delley M."/>
            <person name="Pridmore R.D."/>
            <person name="Arigoni F."/>
        </authorList>
    </citation>
    <scope>NUCLEOTIDE SEQUENCE [LARGE SCALE GENOMIC DNA]</scope>
    <source>
        <strain>NCC 2705</strain>
    </source>
</reference>
<protein>
    <recommendedName>
        <fullName evidence="1">ATP synthase subunit alpha</fullName>
        <ecNumber evidence="1">7.1.2.2</ecNumber>
    </recommendedName>
    <alternativeName>
        <fullName evidence="1">ATP synthase F1 sector subunit alpha</fullName>
    </alternativeName>
    <alternativeName>
        <fullName evidence="1">F-ATPase subunit alpha</fullName>
    </alternativeName>
</protein>
<dbReference type="EC" id="7.1.2.2" evidence="1"/>
<dbReference type="EMBL" id="AE014295">
    <property type="protein sequence ID" value="AAN24197.1"/>
    <property type="molecule type" value="Genomic_DNA"/>
</dbReference>
<dbReference type="RefSeq" id="NP_695561.1">
    <property type="nucleotide sequence ID" value="NC_004307.2"/>
</dbReference>
<dbReference type="RefSeq" id="WP_007051480.1">
    <property type="nucleotide sequence ID" value="NC_004307.2"/>
</dbReference>
<dbReference type="SMR" id="Q8G7B1"/>
<dbReference type="STRING" id="206672.BL0359"/>
<dbReference type="EnsemblBacteria" id="AAN24197">
    <property type="protein sequence ID" value="AAN24197"/>
    <property type="gene ID" value="BL0359"/>
</dbReference>
<dbReference type="GeneID" id="69577497"/>
<dbReference type="KEGG" id="blo:BL0359"/>
<dbReference type="PATRIC" id="fig|206672.9.peg.1095"/>
<dbReference type="HOGENOM" id="CLU_010091_2_1_11"/>
<dbReference type="OrthoDB" id="9803053at2"/>
<dbReference type="PhylomeDB" id="Q8G7B1"/>
<dbReference type="Proteomes" id="UP000000439">
    <property type="component" value="Chromosome"/>
</dbReference>
<dbReference type="GO" id="GO:0005886">
    <property type="term" value="C:plasma membrane"/>
    <property type="evidence" value="ECO:0007669"/>
    <property type="project" value="UniProtKB-SubCell"/>
</dbReference>
<dbReference type="GO" id="GO:0045259">
    <property type="term" value="C:proton-transporting ATP synthase complex"/>
    <property type="evidence" value="ECO:0007669"/>
    <property type="project" value="UniProtKB-KW"/>
</dbReference>
<dbReference type="GO" id="GO:0043531">
    <property type="term" value="F:ADP binding"/>
    <property type="evidence" value="ECO:0007669"/>
    <property type="project" value="TreeGrafter"/>
</dbReference>
<dbReference type="GO" id="GO:0005524">
    <property type="term" value="F:ATP binding"/>
    <property type="evidence" value="ECO:0007669"/>
    <property type="project" value="UniProtKB-UniRule"/>
</dbReference>
<dbReference type="GO" id="GO:0046933">
    <property type="term" value="F:proton-transporting ATP synthase activity, rotational mechanism"/>
    <property type="evidence" value="ECO:0007669"/>
    <property type="project" value="UniProtKB-UniRule"/>
</dbReference>
<dbReference type="CDD" id="cd18113">
    <property type="entry name" value="ATP-synt_F1_alpha_C"/>
    <property type="match status" value="1"/>
</dbReference>
<dbReference type="CDD" id="cd18116">
    <property type="entry name" value="ATP-synt_F1_alpha_N"/>
    <property type="match status" value="1"/>
</dbReference>
<dbReference type="CDD" id="cd01132">
    <property type="entry name" value="F1-ATPase_alpha_CD"/>
    <property type="match status" value="1"/>
</dbReference>
<dbReference type="FunFam" id="1.20.150.20:FF:000001">
    <property type="entry name" value="ATP synthase subunit alpha"/>
    <property type="match status" value="1"/>
</dbReference>
<dbReference type="FunFam" id="3.40.50.300:FF:000002">
    <property type="entry name" value="ATP synthase subunit alpha"/>
    <property type="match status" value="1"/>
</dbReference>
<dbReference type="Gene3D" id="2.40.30.20">
    <property type="match status" value="1"/>
</dbReference>
<dbReference type="Gene3D" id="1.20.150.20">
    <property type="entry name" value="ATP synthase alpha/beta chain, C-terminal domain"/>
    <property type="match status" value="1"/>
</dbReference>
<dbReference type="Gene3D" id="3.40.50.300">
    <property type="entry name" value="P-loop containing nucleotide triphosphate hydrolases"/>
    <property type="match status" value="1"/>
</dbReference>
<dbReference type="HAMAP" id="MF_01346">
    <property type="entry name" value="ATP_synth_alpha_bact"/>
    <property type="match status" value="1"/>
</dbReference>
<dbReference type="InterPro" id="IPR023366">
    <property type="entry name" value="ATP_synth_asu-like_sf"/>
</dbReference>
<dbReference type="InterPro" id="IPR000793">
    <property type="entry name" value="ATP_synth_asu_C"/>
</dbReference>
<dbReference type="InterPro" id="IPR038376">
    <property type="entry name" value="ATP_synth_asu_C_sf"/>
</dbReference>
<dbReference type="InterPro" id="IPR033732">
    <property type="entry name" value="ATP_synth_F1_a_nt-bd_dom"/>
</dbReference>
<dbReference type="InterPro" id="IPR005294">
    <property type="entry name" value="ATP_synth_F1_asu"/>
</dbReference>
<dbReference type="InterPro" id="IPR020003">
    <property type="entry name" value="ATPase_a/bsu_AS"/>
</dbReference>
<dbReference type="InterPro" id="IPR004100">
    <property type="entry name" value="ATPase_F1/V1/A1_a/bsu_N"/>
</dbReference>
<dbReference type="InterPro" id="IPR036121">
    <property type="entry name" value="ATPase_F1/V1/A1_a/bsu_N_sf"/>
</dbReference>
<dbReference type="InterPro" id="IPR000194">
    <property type="entry name" value="ATPase_F1/V1/A1_a/bsu_nucl-bd"/>
</dbReference>
<dbReference type="InterPro" id="IPR027417">
    <property type="entry name" value="P-loop_NTPase"/>
</dbReference>
<dbReference type="NCBIfam" id="TIGR00962">
    <property type="entry name" value="atpA"/>
    <property type="match status" value="1"/>
</dbReference>
<dbReference type="NCBIfam" id="NF009884">
    <property type="entry name" value="PRK13343.1"/>
    <property type="match status" value="1"/>
</dbReference>
<dbReference type="PANTHER" id="PTHR48082">
    <property type="entry name" value="ATP SYNTHASE SUBUNIT ALPHA, MITOCHONDRIAL"/>
    <property type="match status" value="1"/>
</dbReference>
<dbReference type="PANTHER" id="PTHR48082:SF2">
    <property type="entry name" value="ATP SYNTHASE SUBUNIT ALPHA, MITOCHONDRIAL"/>
    <property type="match status" value="1"/>
</dbReference>
<dbReference type="Pfam" id="PF00006">
    <property type="entry name" value="ATP-synt_ab"/>
    <property type="match status" value="1"/>
</dbReference>
<dbReference type="Pfam" id="PF00306">
    <property type="entry name" value="ATP-synt_ab_C"/>
    <property type="match status" value="1"/>
</dbReference>
<dbReference type="Pfam" id="PF02874">
    <property type="entry name" value="ATP-synt_ab_N"/>
    <property type="match status" value="1"/>
</dbReference>
<dbReference type="SUPFAM" id="SSF47917">
    <property type="entry name" value="C-terminal domain of alpha and beta subunits of F1 ATP synthase"/>
    <property type="match status" value="1"/>
</dbReference>
<dbReference type="SUPFAM" id="SSF50615">
    <property type="entry name" value="N-terminal domain of alpha and beta subunits of F1 ATP synthase"/>
    <property type="match status" value="1"/>
</dbReference>
<dbReference type="SUPFAM" id="SSF52540">
    <property type="entry name" value="P-loop containing nucleoside triphosphate hydrolases"/>
    <property type="match status" value="1"/>
</dbReference>
<dbReference type="PROSITE" id="PS00152">
    <property type="entry name" value="ATPASE_ALPHA_BETA"/>
    <property type="match status" value="1"/>
</dbReference>
<feature type="chain" id="PRO_0000238205" description="ATP synthase subunit alpha">
    <location>
        <begin position="1"/>
        <end position="543"/>
    </location>
</feature>
<feature type="region of interest" description="Disordered" evidence="2">
    <location>
        <begin position="521"/>
        <end position="543"/>
    </location>
</feature>
<feature type="binding site" evidence="1">
    <location>
        <begin position="174"/>
        <end position="181"/>
    </location>
    <ligand>
        <name>ATP</name>
        <dbReference type="ChEBI" id="CHEBI:30616"/>
    </ligand>
</feature>
<feature type="site" description="Required for activity" evidence="1">
    <location>
        <position position="375"/>
    </location>
</feature>
<accession>Q8G7B1</accession>
<comment type="function">
    <text evidence="1">Produces ATP from ADP in the presence of a proton gradient across the membrane. The alpha chain is a regulatory subunit.</text>
</comment>
<comment type="catalytic activity">
    <reaction evidence="1">
        <text>ATP + H2O + 4 H(+)(in) = ADP + phosphate + 5 H(+)(out)</text>
        <dbReference type="Rhea" id="RHEA:57720"/>
        <dbReference type="ChEBI" id="CHEBI:15377"/>
        <dbReference type="ChEBI" id="CHEBI:15378"/>
        <dbReference type="ChEBI" id="CHEBI:30616"/>
        <dbReference type="ChEBI" id="CHEBI:43474"/>
        <dbReference type="ChEBI" id="CHEBI:456216"/>
        <dbReference type="EC" id="7.1.2.2"/>
    </reaction>
</comment>
<comment type="subunit">
    <text evidence="1">F-type ATPases have 2 components, CF(1) - the catalytic core - and CF(0) - the membrane proton channel. CF(1) has five subunits: alpha(3), beta(3), gamma(1), delta(1), epsilon(1). CF(0) has three main subunits: a(1), b(2) and c(9-12). The alpha and beta chains form an alternating ring which encloses part of the gamma chain. CF(1) is attached to CF(0) by a central stalk formed by the gamma and epsilon chains, while a peripheral stalk is formed by the delta and b chains.</text>
</comment>
<comment type="subcellular location">
    <subcellularLocation>
        <location evidence="1">Cell membrane</location>
        <topology evidence="1">Peripheral membrane protein</topology>
    </subcellularLocation>
</comment>
<comment type="similarity">
    <text evidence="1">Belongs to the ATPase alpha/beta chains family.</text>
</comment>
<sequence>MAELTIDPASIRKALDDFVSSYKPSDTPTQEVGYVATAGDGIAHVTGLPGCMANELLTFEDGTLGLAFNLDAREIGVVILGDFAGIEEGQEVRRTGEVLSVPVGDGYLGRVVDPLGKPLDGLGEIQGIEGRRILEAQAPDVMHRHPVDEPLSTGLKAIDAMTPIGRGQRQLIIGDRQTGKTAIAIDTIINQKANWESGDPKKQVRCIYVAIGQKGSTIASVKQSLEDAGAMEYTTIVASPAADSAGFKYIAPYTGSAIGQHWMYNGKHVLIVFDDLSKQAEAYRSISLLLRRPPGREAYPGDVFYLHSRLLERCAKVSDDLGGGSMTGLPIVETKANDVSAYIPTNVISITDGQIFLQSDLFNANQRPAVDVGISVSRVGGAAQTKALKKVSGTLKISLAQYRSLESFAMFASDLDAASKAQLTRGAHLTELLKQPQFHPYSPEQEVVSVWTGTHGKLDDLDLKDVLPFEQGLLDYIDHNTDILKTIRETEEFTADTEAALDKAVDEFRSTFVSSAGKPLVEKKPDVDKAAPVDQEKIVAGEK</sequence>
<evidence type="ECO:0000255" key="1">
    <source>
        <dbReference type="HAMAP-Rule" id="MF_01346"/>
    </source>
</evidence>
<evidence type="ECO:0000256" key="2">
    <source>
        <dbReference type="SAM" id="MobiDB-lite"/>
    </source>
</evidence>
<proteinExistence type="inferred from homology"/>
<gene>
    <name evidence="1" type="primary">atpA</name>
    <name type="ordered locus">BL0359</name>
</gene>
<keyword id="KW-0066">ATP synthesis</keyword>
<keyword id="KW-0067">ATP-binding</keyword>
<keyword id="KW-1003">Cell membrane</keyword>
<keyword id="KW-0139">CF(1)</keyword>
<keyword id="KW-0375">Hydrogen ion transport</keyword>
<keyword id="KW-0406">Ion transport</keyword>
<keyword id="KW-0472">Membrane</keyword>
<keyword id="KW-0547">Nucleotide-binding</keyword>
<keyword id="KW-1185">Reference proteome</keyword>
<keyword id="KW-1278">Translocase</keyword>
<keyword id="KW-0813">Transport</keyword>
<name>ATPA_BIFLO</name>
<organism>
    <name type="scientific">Bifidobacterium longum (strain NCC 2705)</name>
    <dbReference type="NCBI Taxonomy" id="206672"/>
    <lineage>
        <taxon>Bacteria</taxon>
        <taxon>Bacillati</taxon>
        <taxon>Actinomycetota</taxon>
        <taxon>Actinomycetes</taxon>
        <taxon>Bifidobacteriales</taxon>
        <taxon>Bifidobacteriaceae</taxon>
        <taxon>Bifidobacterium</taxon>
    </lineage>
</organism>